<evidence type="ECO:0000250" key="1">
    <source>
        <dbReference type="UniProtKB" id="Q9HCM1"/>
    </source>
</evidence>
<evidence type="ECO:0000256" key="2">
    <source>
        <dbReference type="SAM" id="MobiDB-lite"/>
    </source>
</evidence>
<evidence type="ECO:0000269" key="3">
    <source>
    </source>
</evidence>
<evidence type="ECO:0000303" key="4">
    <source>
    </source>
</evidence>
<evidence type="ECO:0000305" key="5"/>
<evidence type="ECO:0000312" key="6">
    <source>
        <dbReference type="MGI" id="MGI:1914496"/>
    </source>
</evidence>
<evidence type="ECO:0007744" key="7">
    <source>
    </source>
</evidence>
<comment type="function">
    <text evidence="3">Plays a role in the regulation of imprinted gene expression, regulates repressive epigenetic modifications associated with SETDB1. Required for the recruitment or accumulation of SETDB1 to the endogenous retroviruses (ERVs) and maintenance of repressive chromatin configuration, contributing to a subset of the SETDB1-dependent ERV silencing in embryonic stem cells.</text>
</comment>
<comment type="subunit">
    <text evidence="3">Interacts with SETDB1.</text>
</comment>
<comment type="subcellular location">
    <subcellularLocation>
        <location evidence="3">Nucleus</location>
    </subcellularLocation>
    <text evidence="3">Localizes around gamma-tubulin during M phase.</text>
</comment>
<comment type="alternative products">
    <event type="alternative splicing"/>
    <isoform>
        <id>Q5DTW7-1</id>
        <name>1</name>
        <sequence type="displayed"/>
    </isoform>
    <isoform>
        <id>Q5DTW7-3</id>
        <name>2</name>
        <sequence type="described" ref="VSP_026863"/>
    </isoform>
</comment>
<comment type="sequence caution" evidence="5">
    <conflict type="frameshift">
        <sequence resource="EMBL-CDS" id="AAH89381"/>
    </conflict>
</comment>
<comment type="sequence caution" evidence="5">
    <conflict type="frameshift">
        <sequence resource="EMBL-CDS" id="BAB28838"/>
    </conflict>
</comment>
<comment type="sequence caution" evidence="5">
    <conflict type="erroneous termination">
        <sequence resource="EMBL-CDS" id="BAC27639"/>
    </conflict>
    <text>Truncated C-terminus.</text>
</comment>
<comment type="sequence caution" evidence="5">
    <conflict type="frameshift">
        <sequence resource="EMBL-CDS" id="BAC27639"/>
    </conflict>
</comment>
<comment type="sequence caution" evidence="5">
    <conflict type="erroneous initiation">
        <sequence resource="EMBL-CDS" id="BAD90453"/>
    </conflict>
    <text>Extended N-terminus.</text>
</comment>
<sequence>MNWNTKQENVPKPPPYSKTQSSILQHFLMTSTTSQSSFNYSPHNQEASQTSFNYSLHNQEACMYSGNSNSVSQPLLSGRNYITPQTQISVSNMPTRTIVASQSSMERVVSTNGKGPQQPNHNLQTVSSGIMQNVWLPSHTEATISHNPDGGTNMPYMHPPQNQLVTSDTYSMQLQMAPLHSGKVPMTHQGSQGLNHFIPDQLVDWTQYTSNELSYPEYRPPPKQYSYILPATTSLQVKNNQLPTYTQSLQSKHSVPLSSHQYAAEASKRLSALPYSCRYENQHVQNAQPVSKHLPMEVPQSSEVHSSEKKKDTYRGFKQQWQNPNEKVSIGQFSEVKINIKQPYSESVRPSGDGVQALVQNNQEKRKYTYNPNTNQVIDTNATKEKLVRDIKSLVEIKKKFSELARKIKINKSLLMAAGCSKTANTSYTEPIQHSEFSAKEMSAKNGNDCSMELLATCLSLWKNQPSKTTEENVPKPLEEKQCNTSRISTTVVGSANPTNEVHVKSLCSGVGNSQKMMSSSQTVLPVLIPSCESSGVAVGKGTELQIAVVSPLVLSDTNTLPGKDSVPEVLPETLYPVVKEGSVCSLQTQPTETVALPFDVIGAVASNNISAEIPLPVDKEKQHKPIQGDPDIADSSLGKHSPLGTEVLPKPMDSTIVSGPMLQIESICSLAEGDVSYNSQIAEIFNSVQTEPQKPSPNQVIDSQQEQVYDTTENKDFSLQKDKCVQCTDVPHEVPEQPEPLQPEEPASSEYVEANREATEESCREYTGRKESTAKDVCLPAAIQQDPHPRETDMFSKSDHSLPAINEINDESEPISYLHDQLSELLKEFPYGIETFNRHEVSLDQQKTHKIVENQTGGKTSNVSGDSTDQIKITVLNSEQIKELFPEDDQPCDKLAEPENKEIVAEVKSPCDSQIPREESHDLGMLDPEKDKIHCCALGWLSMVYEGVPQCHCSSTEKKEKDQCLDINSSKQGEQPCNSGITIFEINPVSNNSKTPLTQATEEGHFSAVHGEKTKASKTKDNREGQELACHFSAKCYKKDKKGNFKIRHDTSLKMEQKLKNISSKCDIPNPSKCNKIAAPEILHVTTSNSAKNMPFSKQASQESLQKKHTSQDLGPVKAPIELSSNTDPCRSNTSSVQSVSPEKKKLKFKAGGSRLKYFEKRKTDHVIIPDVEIKKKKYEKQEQNKNAGDTLKLCSILTESNERASVQEKTVPSPESSDPKGSSSKSTRVITVQEYLQRQKDKQITGNNASRNICVETVLCDSGHTKTSKHSAAVSWGKLVEGQSISAETAKELEHNSSSHGKDFKIHHSEASRTHSVSNNNKGKFDGKQPDKMFKNKTSMNNESNQMPLQVKEQRKQYLNRVAFKCTERESICLTKLDSASKKLSIEKKSGEYTSKTKDTDKPSMLEFKLCPDVLLKNTSTVDKQDCPGPGPEKEQAPVQVSGIKSTKEDWLKCIPTRTKMPESSQRDSADSRLSKRSLSADEFEILQNPVKESNIMFRTYKKMYLEKRSRSLGSSPVK</sequence>
<feature type="chain" id="PRO_0000295243" description="Retroelement silencing factor 1">
    <location>
        <begin position="1"/>
        <end position="1521"/>
    </location>
</feature>
<feature type="region of interest" description="Disordered" evidence="2">
    <location>
        <begin position="621"/>
        <end position="640"/>
    </location>
</feature>
<feature type="region of interest" description="Disordered" evidence="2">
    <location>
        <begin position="1093"/>
        <end position="1147"/>
    </location>
</feature>
<feature type="region of interest" description="Disordered" evidence="2">
    <location>
        <begin position="1204"/>
        <end position="1230"/>
    </location>
</feature>
<feature type="region of interest" description="Disordered" evidence="2">
    <location>
        <begin position="1312"/>
        <end position="1335"/>
    </location>
</feature>
<feature type="region of interest" description="Disordered" evidence="2">
    <location>
        <begin position="1425"/>
        <end position="1444"/>
    </location>
</feature>
<feature type="region of interest" description="Disordered" evidence="2">
    <location>
        <begin position="1457"/>
        <end position="1485"/>
    </location>
</feature>
<feature type="compositionally biased region" description="Polar residues" evidence="2">
    <location>
        <begin position="1093"/>
        <end position="1105"/>
    </location>
</feature>
<feature type="compositionally biased region" description="Polar residues" evidence="2">
    <location>
        <begin position="1124"/>
        <end position="1142"/>
    </location>
</feature>
<feature type="compositionally biased region" description="Low complexity" evidence="2">
    <location>
        <begin position="1214"/>
        <end position="1228"/>
    </location>
</feature>
<feature type="compositionally biased region" description="Basic and acidic residues" evidence="2">
    <location>
        <begin position="1325"/>
        <end position="1335"/>
    </location>
</feature>
<feature type="compositionally biased region" description="Basic and acidic residues" evidence="2">
    <location>
        <begin position="1467"/>
        <end position="1476"/>
    </location>
</feature>
<feature type="modified residue" description="Phosphoserine" evidence="7">
    <location>
        <position position="910"/>
    </location>
</feature>
<feature type="modified residue" description="Phosphothreonine" evidence="1">
    <location>
        <position position="996"/>
    </location>
</feature>
<feature type="modified residue" description="Phosphoserine" evidence="1">
    <location>
        <position position="1142"/>
    </location>
</feature>
<feature type="modified residue" description="Phosphoserine" evidence="1">
    <location>
        <position position="1482"/>
    </location>
</feature>
<feature type="modified residue" description="Phosphoserine" evidence="1">
    <location>
        <position position="1514"/>
    </location>
</feature>
<feature type="cross-link" description="Glycyl lysine isopeptide (Lys-Gly) (interchain with G-Cter in SUMO2)" evidence="1">
    <location>
        <position position="223"/>
    </location>
</feature>
<feature type="cross-link" description="Glycyl lysine isopeptide (Lys-Gly) (interchain with G-Cter in SUMO2)" evidence="1">
    <location>
        <position position="1411"/>
    </location>
</feature>
<feature type="splice variant" id="VSP_026863" description="In isoform 2." evidence="4">
    <location>
        <begin position="1440"/>
        <end position="1441"/>
    </location>
</feature>
<feature type="sequence conflict" description="In Ref. 2; BAC27639." evidence="5" ref="2">
    <original>P</original>
    <variation>S</variation>
    <location>
        <position position="14"/>
    </location>
</feature>
<feature type="sequence conflict" description="In Ref. 2; BAC27639." evidence="5" ref="2">
    <original>I</original>
    <variation>N</variation>
    <location>
        <position position="23"/>
    </location>
</feature>
<feature type="sequence conflict" description="In Ref. 2; BAC27639." evidence="5" ref="2">
    <original>Q</original>
    <variation>R</variation>
    <location>
        <position position="163"/>
    </location>
</feature>
<feature type="sequence conflict" description="In Ref. 3; AAH55761." evidence="5" ref="3">
    <original>S</original>
    <variation>L</variation>
    <location>
        <position position="1444"/>
    </location>
</feature>
<accession>Q5DTW7</accession>
<accession>Q5FWH0</accession>
<accession>Q7TNT1</accession>
<accession>Q8CCW3</accession>
<accession>Q8CCZ9</accession>
<accession>Q9CSA5</accession>
<accession>Q9CU82</accession>
<name>RESF1_MOUSE</name>
<gene>
    <name evidence="6" type="primary">Resf1</name>
    <name type="synonym">Kiaa1551</name>
</gene>
<keyword id="KW-0025">Alternative splicing</keyword>
<keyword id="KW-1017">Isopeptide bond</keyword>
<keyword id="KW-0539">Nucleus</keyword>
<keyword id="KW-0597">Phosphoprotein</keyword>
<keyword id="KW-1185">Reference proteome</keyword>
<keyword id="KW-0832">Ubl conjugation</keyword>
<organism>
    <name type="scientific">Mus musculus</name>
    <name type="common">Mouse</name>
    <dbReference type="NCBI Taxonomy" id="10090"/>
    <lineage>
        <taxon>Eukaryota</taxon>
        <taxon>Metazoa</taxon>
        <taxon>Chordata</taxon>
        <taxon>Craniata</taxon>
        <taxon>Vertebrata</taxon>
        <taxon>Euteleostomi</taxon>
        <taxon>Mammalia</taxon>
        <taxon>Eutheria</taxon>
        <taxon>Euarchontoglires</taxon>
        <taxon>Glires</taxon>
        <taxon>Rodentia</taxon>
        <taxon>Myomorpha</taxon>
        <taxon>Muroidea</taxon>
        <taxon>Muridae</taxon>
        <taxon>Murinae</taxon>
        <taxon>Mus</taxon>
        <taxon>Mus</taxon>
    </lineage>
</organism>
<protein>
    <recommendedName>
        <fullName evidence="5">Retroelement silencing factor 1</fullName>
    </recommendedName>
</protein>
<reference key="1">
    <citation type="submission" date="2005-02" db="EMBL/GenBank/DDBJ databases">
        <title>Prediction of the coding sequences of mouse homologues of KIAA gene. the complete nucleotide sequences of mouse KIAA-homologous cDNAs identified by screening of terminal sequences of cDNA clones randomly sampled from size-fractionated libraries.</title>
        <authorList>
            <person name="Okazaki N."/>
            <person name="Kikuno R.F."/>
            <person name="Ohara R."/>
            <person name="Inamoto S."/>
            <person name="Nagase T."/>
            <person name="Ohara O."/>
            <person name="Koga H."/>
        </authorList>
    </citation>
    <scope>NUCLEOTIDE SEQUENCE [LARGE SCALE MRNA] (ISOFORM 1)</scope>
    <source>
        <tissue>Brain</tissue>
    </source>
</reference>
<reference key="2">
    <citation type="journal article" date="2005" name="Science">
        <title>The transcriptional landscape of the mammalian genome.</title>
        <authorList>
            <person name="Carninci P."/>
            <person name="Kasukawa T."/>
            <person name="Katayama S."/>
            <person name="Gough J."/>
            <person name="Frith M.C."/>
            <person name="Maeda N."/>
            <person name="Oyama R."/>
            <person name="Ravasi T."/>
            <person name="Lenhard B."/>
            <person name="Wells C."/>
            <person name="Kodzius R."/>
            <person name="Shimokawa K."/>
            <person name="Bajic V.B."/>
            <person name="Brenner S.E."/>
            <person name="Batalov S."/>
            <person name="Forrest A.R."/>
            <person name="Zavolan M."/>
            <person name="Davis M.J."/>
            <person name="Wilming L.G."/>
            <person name="Aidinis V."/>
            <person name="Allen J.E."/>
            <person name="Ambesi-Impiombato A."/>
            <person name="Apweiler R."/>
            <person name="Aturaliya R.N."/>
            <person name="Bailey T.L."/>
            <person name="Bansal M."/>
            <person name="Baxter L."/>
            <person name="Beisel K.W."/>
            <person name="Bersano T."/>
            <person name="Bono H."/>
            <person name="Chalk A.M."/>
            <person name="Chiu K.P."/>
            <person name="Choudhary V."/>
            <person name="Christoffels A."/>
            <person name="Clutterbuck D.R."/>
            <person name="Crowe M.L."/>
            <person name="Dalla E."/>
            <person name="Dalrymple B.P."/>
            <person name="de Bono B."/>
            <person name="Della Gatta G."/>
            <person name="di Bernardo D."/>
            <person name="Down T."/>
            <person name="Engstrom P."/>
            <person name="Fagiolini M."/>
            <person name="Faulkner G."/>
            <person name="Fletcher C.F."/>
            <person name="Fukushima T."/>
            <person name="Furuno M."/>
            <person name="Futaki S."/>
            <person name="Gariboldi M."/>
            <person name="Georgii-Hemming P."/>
            <person name="Gingeras T.R."/>
            <person name="Gojobori T."/>
            <person name="Green R.E."/>
            <person name="Gustincich S."/>
            <person name="Harbers M."/>
            <person name="Hayashi Y."/>
            <person name="Hensch T.K."/>
            <person name="Hirokawa N."/>
            <person name="Hill D."/>
            <person name="Huminiecki L."/>
            <person name="Iacono M."/>
            <person name="Ikeo K."/>
            <person name="Iwama A."/>
            <person name="Ishikawa T."/>
            <person name="Jakt M."/>
            <person name="Kanapin A."/>
            <person name="Katoh M."/>
            <person name="Kawasawa Y."/>
            <person name="Kelso J."/>
            <person name="Kitamura H."/>
            <person name="Kitano H."/>
            <person name="Kollias G."/>
            <person name="Krishnan S.P."/>
            <person name="Kruger A."/>
            <person name="Kummerfeld S.K."/>
            <person name="Kurochkin I.V."/>
            <person name="Lareau L.F."/>
            <person name="Lazarevic D."/>
            <person name="Lipovich L."/>
            <person name="Liu J."/>
            <person name="Liuni S."/>
            <person name="McWilliam S."/>
            <person name="Madan Babu M."/>
            <person name="Madera M."/>
            <person name="Marchionni L."/>
            <person name="Matsuda H."/>
            <person name="Matsuzawa S."/>
            <person name="Miki H."/>
            <person name="Mignone F."/>
            <person name="Miyake S."/>
            <person name="Morris K."/>
            <person name="Mottagui-Tabar S."/>
            <person name="Mulder N."/>
            <person name="Nakano N."/>
            <person name="Nakauchi H."/>
            <person name="Ng P."/>
            <person name="Nilsson R."/>
            <person name="Nishiguchi S."/>
            <person name="Nishikawa S."/>
            <person name="Nori F."/>
            <person name="Ohara O."/>
            <person name="Okazaki Y."/>
            <person name="Orlando V."/>
            <person name="Pang K.C."/>
            <person name="Pavan W.J."/>
            <person name="Pavesi G."/>
            <person name="Pesole G."/>
            <person name="Petrovsky N."/>
            <person name="Piazza S."/>
            <person name="Reed J."/>
            <person name="Reid J.F."/>
            <person name="Ring B.Z."/>
            <person name="Ringwald M."/>
            <person name="Rost B."/>
            <person name="Ruan Y."/>
            <person name="Salzberg S.L."/>
            <person name="Sandelin A."/>
            <person name="Schneider C."/>
            <person name="Schoenbach C."/>
            <person name="Sekiguchi K."/>
            <person name="Semple C.A."/>
            <person name="Seno S."/>
            <person name="Sessa L."/>
            <person name="Sheng Y."/>
            <person name="Shibata Y."/>
            <person name="Shimada H."/>
            <person name="Shimada K."/>
            <person name="Silva D."/>
            <person name="Sinclair B."/>
            <person name="Sperling S."/>
            <person name="Stupka E."/>
            <person name="Sugiura K."/>
            <person name="Sultana R."/>
            <person name="Takenaka Y."/>
            <person name="Taki K."/>
            <person name="Tammoja K."/>
            <person name="Tan S.L."/>
            <person name="Tang S."/>
            <person name="Taylor M.S."/>
            <person name="Tegner J."/>
            <person name="Teichmann S.A."/>
            <person name="Ueda H.R."/>
            <person name="van Nimwegen E."/>
            <person name="Verardo R."/>
            <person name="Wei C.L."/>
            <person name="Yagi K."/>
            <person name="Yamanishi H."/>
            <person name="Zabarovsky E."/>
            <person name="Zhu S."/>
            <person name="Zimmer A."/>
            <person name="Hide W."/>
            <person name="Bult C."/>
            <person name="Grimmond S.M."/>
            <person name="Teasdale R.D."/>
            <person name="Liu E.T."/>
            <person name="Brusic V."/>
            <person name="Quackenbush J."/>
            <person name="Wahlestedt C."/>
            <person name="Mattick J.S."/>
            <person name="Hume D.A."/>
            <person name="Kai C."/>
            <person name="Sasaki D."/>
            <person name="Tomaru Y."/>
            <person name="Fukuda S."/>
            <person name="Kanamori-Katayama M."/>
            <person name="Suzuki M."/>
            <person name="Aoki J."/>
            <person name="Arakawa T."/>
            <person name="Iida J."/>
            <person name="Imamura K."/>
            <person name="Itoh M."/>
            <person name="Kato T."/>
            <person name="Kawaji H."/>
            <person name="Kawagashira N."/>
            <person name="Kawashima T."/>
            <person name="Kojima M."/>
            <person name="Kondo S."/>
            <person name="Konno H."/>
            <person name="Nakano K."/>
            <person name="Ninomiya N."/>
            <person name="Nishio T."/>
            <person name="Okada M."/>
            <person name="Plessy C."/>
            <person name="Shibata K."/>
            <person name="Shiraki T."/>
            <person name="Suzuki S."/>
            <person name="Tagami M."/>
            <person name="Waki K."/>
            <person name="Watahiki A."/>
            <person name="Okamura-Oho Y."/>
            <person name="Suzuki H."/>
            <person name="Kawai J."/>
            <person name="Hayashizaki Y."/>
        </authorList>
    </citation>
    <scope>NUCLEOTIDE SEQUENCE [LARGE SCALE MRNA] OF 1-1173 (ISOFORM 1)</scope>
    <source>
        <strain>C57BL/6J</strain>
        <tissue>Embryo</tissue>
        <tissue>Head</tissue>
        <tissue>Medulla oblongata</tissue>
    </source>
</reference>
<reference key="3">
    <citation type="journal article" date="2004" name="Genome Res.">
        <title>The status, quality, and expansion of the NIH full-length cDNA project: the Mammalian Gene Collection (MGC).</title>
        <authorList>
            <consortium name="The MGC Project Team"/>
        </authorList>
    </citation>
    <scope>NUCLEOTIDE SEQUENCE [LARGE SCALE MRNA] OF 1109-1521 (ISOFORM 2)</scope>
    <scope>NUCLEOTIDE SEQUENCE [LARGE SCALE MRNA] OF 1128-1521 (ISOFORM 1)</scope>
    <source>
        <strain>C57BL/6J</strain>
        <tissue>Brain</tissue>
    </source>
</reference>
<reference key="4">
    <citation type="journal article" date="2010" name="Cell">
        <title>A tissue-specific atlas of mouse protein phosphorylation and expression.</title>
        <authorList>
            <person name="Huttlin E.L."/>
            <person name="Jedrychowski M.P."/>
            <person name="Elias J.E."/>
            <person name="Goswami T."/>
            <person name="Rad R."/>
            <person name="Beausoleil S.A."/>
            <person name="Villen J."/>
            <person name="Haas W."/>
            <person name="Sowa M.E."/>
            <person name="Gygi S.P."/>
        </authorList>
    </citation>
    <scope>PHOSPHORYLATION [LARGE SCALE ANALYSIS] AT SER-910</scope>
    <scope>IDENTIFICATION BY MASS SPECTROMETRY [LARGE SCALE ANALYSIS]</scope>
    <source>
        <tissue>Kidney</tissue>
        <tissue>Liver</tissue>
        <tissue>Lung</tissue>
        <tissue>Spleen</tissue>
        <tissue>Testis</tissue>
    </source>
</reference>
<reference key="5">
    <citation type="journal article" date="2018" name="Genome Res.">
        <title>A CRISPR knockout screen identifies SETDB1-target retroelement silencing factors in embryonic stem cells.</title>
        <authorList>
            <person name="Fukuda K."/>
            <person name="Okuda A."/>
            <person name="Yusa K."/>
            <person name="Shinkai Y."/>
        </authorList>
    </citation>
    <scope>FUNCTION</scope>
    <scope>INTERACTION WITH SETDB1</scope>
    <scope>SUBCELLULAR LOCATION</scope>
</reference>
<dbReference type="EMBL" id="AK220403">
    <property type="protein sequence ID" value="BAD90453.1"/>
    <property type="status" value="ALT_INIT"/>
    <property type="molecule type" value="mRNA"/>
</dbReference>
<dbReference type="EMBL" id="AK013408">
    <property type="protein sequence ID" value="BAB28838.1"/>
    <property type="status" value="ALT_FRAME"/>
    <property type="molecule type" value="mRNA"/>
</dbReference>
<dbReference type="EMBL" id="AK017376">
    <property type="protein sequence ID" value="BAB30717.1"/>
    <property type="molecule type" value="mRNA"/>
</dbReference>
<dbReference type="EMBL" id="AK031797">
    <property type="protein sequence ID" value="BAC27553.2"/>
    <property type="molecule type" value="mRNA"/>
</dbReference>
<dbReference type="EMBL" id="AK031989">
    <property type="protein sequence ID" value="BAC27639.1"/>
    <property type="status" value="ALT_SEQ"/>
    <property type="molecule type" value="mRNA"/>
</dbReference>
<dbReference type="EMBL" id="BC055761">
    <property type="protein sequence ID" value="AAH55761.1"/>
    <property type="molecule type" value="mRNA"/>
</dbReference>
<dbReference type="EMBL" id="BC089381">
    <property type="protein sequence ID" value="AAH89381.1"/>
    <property type="status" value="ALT_FRAME"/>
    <property type="molecule type" value="mRNA"/>
</dbReference>
<dbReference type="CCDS" id="CCDS20717.1">
    <molecule id="Q5DTW7-1"/>
</dbReference>
<dbReference type="RefSeq" id="NP_001276590.1">
    <molecule id="Q5DTW7-1"/>
    <property type="nucleotide sequence ID" value="NM_001289661.1"/>
</dbReference>
<dbReference type="RefSeq" id="NP_001276591.1">
    <molecule id="Q5DTW7-1"/>
    <property type="nucleotide sequence ID" value="NM_001289662.1"/>
</dbReference>
<dbReference type="RefSeq" id="NP_080330.1">
    <molecule id="Q5DTW7-1"/>
    <property type="nucleotide sequence ID" value="NM_026054.3"/>
</dbReference>
<dbReference type="RefSeq" id="XP_006507144.1">
    <molecule id="Q5DTW7-1"/>
    <property type="nucleotide sequence ID" value="XM_006507081.5"/>
</dbReference>
<dbReference type="RefSeq" id="XP_006507146.1">
    <molecule id="Q5DTW7-1"/>
    <property type="nucleotide sequence ID" value="XM_006507083.4"/>
</dbReference>
<dbReference type="RefSeq" id="XP_006507147.1">
    <molecule id="Q5DTW7-1"/>
    <property type="nucleotide sequence ID" value="XM_006507084.4"/>
</dbReference>
<dbReference type="RefSeq" id="XP_011239924.1">
    <molecule id="Q5DTW7-1"/>
    <property type="nucleotide sequence ID" value="XM_011241622.3"/>
</dbReference>
<dbReference type="RefSeq" id="XP_030111414.1">
    <molecule id="Q5DTW7-1"/>
    <property type="nucleotide sequence ID" value="XM_030255554.2"/>
</dbReference>
<dbReference type="RefSeq" id="XP_036008163.1">
    <molecule id="Q5DTW7-1"/>
    <property type="nucleotide sequence ID" value="XM_036152270.1"/>
</dbReference>
<dbReference type="SMR" id="Q5DTW7"/>
<dbReference type="BioGRID" id="212044">
    <property type="interactions" value="1"/>
</dbReference>
<dbReference type="FunCoup" id="Q5DTW7">
    <property type="interactions" value="1423"/>
</dbReference>
<dbReference type="IntAct" id="Q5DTW7">
    <property type="interactions" value="1"/>
</dbReference>
<dbReference type="STRING" id="10090.ENSMUSP00000041180"/>
<dbReference type="GlyGen" id="Q5DTW7">
    <property type="glycosylation" value="14 sites, 1 O-linked glycan (14 sites)"/>
</dbReference>
<dbReference type="iPTMnet" id="Q5DTW7"/>
<dbReference type="PhosphoSitePlus" id="Q5DTW7"/>
<dbReference type="jPOST" id="Q5DTW7"/>
<dbReference type="PaxDb" id="10090-ENSMUSP00000041180"/>
<dbReference type="ProteomicsDB" id="269158">
    <molecule id="Q5DTW7-1"/>
</dbReference>
<dbReference type="ProteomicsDB" id="269159">
    <molecule id="Q5DTW7-3"/>
</dbReference>
<dbReference type="Pumba" id="Q5DTW7"/>
<dbReference type="Antibodypedia" id="2871">
    <property type="antibodies" value="27 antibodies from 11 providers"/>
</dbReference>
<dbReference type="DNASU" id="67246"/>
<dbReference type="Ensembl" id="ENSMUST00000046689.13">
    <molecule id="Q5DTW7-1"/>
    <property type="protein sequence ID" value="ENSMUSP00000041180.7"/>
    <property type="gene ID" value="ENSMUSG00000032712.17"/>
</dbReference>
<dbReference type="Ensembl" id="ENSMUST00000100765.11">
    <molecule id="Q5DTW7-1"/>
    <property type="protein sequence ID" value="ENSMUSP00000098328.5"/>
    <property type="gene ID" value="ENSMUSG00000032712.17"/>
</dbReference>
<dbReference type="Ensembl" id="ENSMUST00000189932.7">
    <molecule id="Q5DTW7-1"/>
    <property type="protein sequence ID" value="ENSMUSP00000140026.2"/>
    <property type="gene ID" value="ENSMUSG00000032712.17"/>
</dbReference>
<dbReference type="GeneID" id="67246"/>
<dbReference type="KEGG" id="mmu:67246"/>
<dbReference type="UCSC" id="uc009eub.2">
    <molecule id="Q5DTW7-1"/>
    <property type="organism name" value="mouse"/>
</dbReference>
<dbReference type="AGR" id="MGI:1914496"/>
<dbReference type="CTD" id="55196"/>
<dbReference type="MGI" id="MGI:1914496">
    <property type="gene designation" value="Resf1"/>
</dbReference>
<dbReference type="VEuPathDB" id="HostDB:ENSMUSG00000032712"/>
<dbReference type="eggNOG" id="ENOG502S9FU">
    <property type="taxonomic scope" value="Eukaryota"/>
</dbReference>
<dbReference type="GeneTree" id="ENSGT00390000018491"/>
<dbReference type="HOGENOM" id="CLU_002739_0_0_1"/>
<dbReference type="InParanoid" id="Q5DTW7"/>
<dbReference type="OMA" id="TYKQMYL"/>
<dbReference type="OrthoDB" id="9909281at2759"/>
<dbReference type="PhylomeDB" id="Q5DTW7"/>
<dbReference type="TreeFam" id="TF336094"/>
<dbReference type="BioGRID-ORCS" id="67246">
    <property type="hits" value="4 hits in 76 CRISPR screens"/>
</dbReference>
<dbReference type="ChiTaRS" id="2810474O19Rik">
    <property type="organism name" value="mouse"/>
</dbReference>
<dbReference type="PRO" id="PR:Q5DTW7"/>
<dbReference type="Proteomes" id="UP000000589">
    <property type="component" value="Chromosome 6"/>
</dbReference>
<dbReference type="RNAct" id="Q5DTW7">
    <property type="molecule type" value="protein"/>
</dbReference>
<dbReference type="Bgee" id="ENSMUSG00000032712">
    <property type="expression patterns" value="Expressed in animal zygote and 252 other cell types or tissues"/>
</dbReference>
<dbReference type="ExpressionAtlas" id="Q5DTW7">
    <property type="expression patterns" value="baseline and differential"/>
</dbReference>
<dbReference type="GO" id="GO:0005634">
    <property type="term" value="C:nucleus"/>
    <property type="evidence" value="ECO:0000315"/>
    <property type="project" value="UniProtKB"/>
</dbReference>
<dbReference type="GO" id="GO:1990226">
    <property type="term" value="F:histone methyltransferase binding"/>
    <property type="evidence" value="ECO:0000353"/>
    <property type="project" value="UniProtKB"/>
</dbReference>
<dbReference type="GO" id="GO:0009617">
    <property type="term" value="P:response to bacterium"/>
    <property type="evidence" value="ECO:0000270"/>
    <property type="project" value="MGI"/>
</dbReference>
<dbReference type="GO" id="GO:0141005">
    <property type="term" value="P:transposable element silencing by heterochromatin formation"/>
    <property type="evidence" value="ECO:0000315"/>
    <property type="project" value="UniProtKB"/>
</dbReference>
<dbReference type="InterPro" id="IPR027866">
    <property type="entry name" value="RESF1"/>
</dbReference>
<dbReference type="PANTHER" id="PTHR21604">
    <property type="entry name" value="RETROELEMENT SILENCING FACTOR 1"/>
    <property type="match status" value="1"/>
</dbReference>
<dbReference type="PANTHER" id="PTHR21604:SF0">
    <property type="entry name" value="RETROELEMENT SILENCING FACTOR 1"/>
    <property type="match status" value="1"/>
</dbReference>
<dbReference type="Pfam" id="PF15395">
    <property type="entry name" value="DUF4617"/>
    <property type="match status" value="1"/>
</dbReference>
<proteinExistence type="evidence at protein level"/>